<keyword id="KW-0002">3D-structure</keyword>
<keyword id="KW-0008">Acetylcholine receptor inhibiting toxin</keyword>
<keyword id="KW-0903">Direct protein sequencing</keyword>
<keyword id="KW-1015">Disulfide bond</keyword>
<keyword id="KW-0872">Ion channel impairing toxin</keyword>
<keyword id="KW-0528">Neurotoxin</keyword>
<keyword id="KW-0629">Postsynaptic neurotoxin</keyword>
<keyword id="KW-0964">Secreted</keyword>
<keyword id="KW-0800">Toxin</keyword>
<dbReference type="PIR" id="A01657">
    <property type="entry name" value="N2OH2"/>
</dbReference>
<dbReference type="PDB" id="1TXA">
    <property type="method" value="NMR"/>
    <property type="chains" value="A=1-73"/>
</dbReference>
<dbReference type="PDB" id="1TXB">
    <property type="method" value="NMR"/>
    <property type="chains" value="A=1-73"/>
</dbReference>
<dbReference type="PDB" id="8SXP">
    <property type="method" value="X-ray"/>
    <property type="resolution" value="2.90 A"/>
    <property type="chains" value="C=1-68"/>
</dbReference>
<dbReference type="PDBsum" id="1TXA"/>
<dbReference type="PDBsum" id="1TXB"/>
<dbReference type="PDBsum" id="8SXP"/>
<dbReference type="SMR" id="P01386"/>
<dbReference type="TopDownProteomics" id="P01386"/>
<dbReference type="EvolutionaryTrace" id="P01386"/>
<dbReference type="GO" id="GO:0005576">
    <property type="term" value="C:extracellular region"/>
    <property type="evidence" value="ECO:0007669"/>
    <property type="project" value="UniProtKB-SubCell"/>
</dbReference>
<dbReference type="GO" id="GO:0030550">
    <property type="term" value="F:acetylcholine receptor inhibitor activity"/>
    <property type="evidence" value="ECO:0007669"/>
    <property type="project" value="UniProtKB-KW"/>
</dbReference>
<dbReference type="GO" id="GO:0099106">
    <property type="term" value="F:ion channel regulator activity"/>
    <property type="evidence" value="ECO:0007669"/>
    <property type="project" value="UniProtKB-KW"/>
</dbReference>
<dbReference type="GO" id="GO:0090729">
    <property type="term" value="F:toxin activity"/>
    <property type="evidence" value="ECO:0007669"/>
    <property type="project" value="UniProtKB-KW"/>
</dbReference>
<dbReference type="CDD" id="cd00206">
    <property type="entry name" value="TFP_snake_toxin"/>
    <property type="match status" value="1"/>
</dbReference>
<dbReference type="Gene3D" id="2.10.60.10">
    <property type="entry name" value="CD59"/>
    <property type="match status" value="1"/>
</dbReference>
<dbReference type="InterPro" id="IPR003571">
    <property type="entry name" value="Snake_3FTx"/>
</dbReference>
<dbReference type="InterPro" id="IPR045860">
    <property type="entry name" value="Snake_toxin-like_sf"/>
</dbReference>
<dbReference type="InterPro" id="IPR018354">
    <property type="entry name" value="Snake_toxin_con_site"/>
</dbReference>
<dbReference type="InterPro" id="IPR054131">
    <property type="entry name" value="Toxin_cobra-type"/>
</dbReference>
<dbReference type="Pfam" id="PF21947">
    <property type="entry name" value="Toxin_cobra-type"/>
    <property type="match status" value="1"/>
</dbReference>
<dbReference type="SUPFAM" id="SSF57302">
    <property type="entry name" value="Snake toxin-like"/>
    <property type="match status" value="1"/>
</dbReference>
<dbReference type="PROSITE" id="PS00272">
    <property type="entry name" value="SNAKE_TOXIN"/>
    <property type="match status" value="1"/>
</dbReference>
<name>3L22_OPHHA</name>
<protein>
    <recommendedName>
        <fullName>Long neurotoxin 2</fullName>
    </recommendedName>
    <alternativeName>
        <fullName>Neurotoxin B</fullName>
    </alternativeName>
</protein>
<sequence length="73" mass="8053">TKCYVTPDATSQTCPDGQDICYTKTWCDGFCSSRGKRIDLGCAATCPKVKPGVDIKCCSTDNCNPFPTWKRKH</sequence>
<feature type="chain" id="PRO_0000093557" description="Long neurotoxin 2">
    <location>
        <begin position="1"/>
        <end position="73"/>
    </location>
</feature>
<feature type="disulfide bond" evidence="3">
    <location>
        <begin position="3"/>
        <end position="21"/>
    </location>
</feature>
<feature type="disulfide bond" evidence="3">
    <location>
        <begin position="14"/>
        <end position="42"/>
    </location>
</feature>
<feature type="disulfide bond" evidence="3">
    <location>
        <begin position="27"/>
        <end position="31"/>
    </location>
</feature>
<feature type="disulfide bond" evidence="3">
    <location>
        <begin position="46"/>
        <end position="57"/>
    </location>
</feature>
<feature type="disulfide bond" evidence="3">
    <location>
        <begin position="58"/>
        <end position="63"/>
    </location>
</feature>
<feature type="strand" evidence="7">
    <location>
        <begin position="2"/>
        <end position="5"/>
    </location>
</feature>
<feature type="turn" evidence="7">
    <location>
        <begin position="6"/>
        <end position="9"/>
    </location>
</feature>
<feature type="strand" evidence="7">
    <location>
        <begin position="10"/>
        <end position="13"/>
    </location>
</feature>
<feature type="strand" evidence="7">
    <location>
        <begin position="24"/>
        <end position="26"/>
    </location>
</feature>
<feature type="strand" evidence="6">
    <location>
        <begin position="29"/>
        <end position="31"/>
    </location>
</feature>
<feature type="strand" evidence="7">
    <location>
        <begin position="32"/>
        <end position="34"/>
    </location>
</feature>
<feature type="strand" evidence="7">
    <location>
        <begin position="36"/>
        <end position="39"/>
    </location>
</feature>
<feature type="strand" evidence="6">
    <location>
        <begin position="41"/>
        <end position="43"/>
    </location>
</feature>
<feature type="strand" evidence="6">
    <location>
        <begin position="48"/>
        <end position="50"/>
    </location>
</feature>
<feature type="strand" evidence="5">
    <location>
        <begin position="51"/>
        <end position="53"/>
    </location>
</feature>
<feature type="strand" evidence="5">
    <location>
        <begin position="55"/>
        <end position="62"/>
    </location>
</feature>
<feature type="strand" evidence="6">
    <location>
        <begin position="69"/>
        <end position="71"/>
    </location>
</feature>
<organism>
    <name type="scientific">Ophiophagus hannah</name>
    <name type="common">King cobra</name>
    <name type="synonym">Naja hannah</name>
    <dbReference type="NCBI Taxonomy" id="8665"/>
    <lineage>
        <taxon>Eukaryota</taxon>
        <taxon>Metazoa</taxon>
        <taxon>Chordata</taxon>
        <taxon>Craniata</taxon>
        <taxon>Vertebrata</taxon>
        <taxon>Euteleostomi</taxon>
        <taxon>Lepidosauria</taxon>
        <taxon>Squamata</taxon>
        <taxon>Bifurcata</taxon>
        <taxon>Unidentata</taxon>
        <taxon>Episquamata</taxon>
        <taxon>Toxicofera</taxon>
        <taxon>Serpentes</taxon>
        <taxon>Colubroidea</taxon>
        <taxon>Elapidae</taxon>
        <taxon>Elapinae</taxon>
        <taxon>Ophiophagus</taxon>
    </lineage>
</organism>
<comment type="function">
    <text evidence="1">Binds with high affinity to muscular (alpha-1/CHRNA1) and neuronal (alpha-7/CHRNA7) nicotinic acetylcholine receptor (nAChR) and inhibits acetylcholine from binding to the receptor, thereby impairing neuromuscular and neuronal transmission.</text>
</comment>
<comment type="subcellular location">
    <subcellularLocation>
        <location evidence="2">Secreted</location>
    </subcellularLocation>
</comment>
<comment type="tissue specificity">
    <text evidence="4">Expressed by the venom gland.</text>
</comment>
<comment type="toxic dose">
    <text evidence="2">LD(50) is 0.35 mg/kg by subcutaneous injection.</text>
</comment>
<comment type="similarity">
    <text evidence="4">Belongs to the three-finger toxin family. Long-chain subfamily. Type II alpha-neurotoxin sub-subfamily.</text>
</comment>
<proteinExistence type="evidence at protein level"/>
<accession>P01386</accession>
<reference key="1">
    <citation type="journal article" date="1973" name="Biochim. Biophys. Acta">
        <title>Snake venom toxins the amino acid sequences of two toxins from Ophiophagus hannah (King cobra) venom.</title>
        <authorList>
            <person name="Joubert F.J."/>
        </authorList>
    </citation>
    <scope>PROTEIN SEQUENCE</scope>
    <scope>TOXIC DOSE</scope>
    <scope>SUBCELLULAR LOCATION</scope>
    <source>
        <tissue>Venom</tissue>
    </source>
</reference>
<reference key="2">
    <citation type="journal article" date="2013" name="Proc. Natl. Acad. Sci. U.S.A.">
        <title>The king cobra genome reveals dynamic gene evolution and adaptation in the snake venom system.</title>
        <authorList>
            <person name="Vonk F.J."/>
            <person name="Casewell N.R."/>
            <person name="Henkel C.V."/>
            <person name="Heimberg A.M."/>
            <person name="Jansen H.J."/>
            <person name="McCleary R.J."/>
            <person name="Kerkkamp H.M."/>
            <person name="Vos R.A."/>
            <person name="Guerreiro I."/>
            <person name="Calvete J.J."/>
            <person name="Wuster W."/>
            <person name="Woods A.E."/>
            <person name="Logan J.M."/>
            <person name="Harrison R.A."/>
            <person name="Castoe T.A."/>
            <person name="de Koning A.P."/>
            <person name="Pollock D.D."/>
            <person name="Yandell M."/>
            <person name="Calderon D."/>
            <person name="Renjifo C."/>
            <person name="Currier R.B."/>
            <person name="Salgado D."/>
            <person name="Pla D."/>
            <person name="Sanz L."/>
            <person name="Hyder A.S."/>
            <person name="Ribeiro J.M."/>
            <person name="Arntzen J.W."/>
            <person name="van den Thillart G.E."/>
            <person name="Boetzer M."/>
            <person name="Pirovano W."/>
            <person name="Dirks R.P."/>
            <person name="Spaink H.P."/>
            <person name="Duboule D."/>
            <person name="McGlinn E."/>
            <person name="Kini R.M."/>
            <person name="Richardson M.K."/>
        </authorList>
    </citation>
    <scope>IDENTIFICATION BY MASS SPECTROMETRY</scope>
    <source>
        <tissue>Venom</tissue>
    </source>
</reference>
<reference key="3">
    <citation type="journal article" date="1997" name="J. Biol. Chem.">
        <title>Solution structure of toxin b, a long neurotoxin from the venom of the king cobra (Ophiophagus hannah).</title>
        <authorList>
            <person name="Peng S.S."/>
            <person name="Kumar T.K.S."/>
            <person name="Jayaraman G."/>
            <person name="Chang C.-C."/>
            <person name="Yu C."/>
        </authorList>
    </citation>
    <scope>STRUCTURE BY NMR</scope>
    <scope>DISULFIDE BONDS</scope>
</reference>
<evidence type="ECO:0000250" key="1">
    <source>
        <dbReference type="UniProtKB" id="P60615"/>
    </source>
</evidence>
<evidence type="ECO:0000269" key="2">
    <source>
    </source>
</evidence>
<evidence type="ECO:0000269" key="3">
    <source>
    </source>
</evidence>
<evidence type="ECO:0000305" key="4"/>
<evidence type="ECO:0007829" key="5">
    <source>
        <dbReference type="PDB" id="1TXA"/>
    </source>
</evidence>
<evidence type="ECO:0007829" key="6">
    <source>
        <dbReference type="PDB" id="1TXB"/>
    </source>
</evidence>
<evidence type="ECO:0007829" key="7">
    <source>
        <dbReference type="PDB" id="8SXP"/>
    </source>
</evidence>